<protein>
    <recommendedName>
        <fullName>DNA nucleotidylexotransferase</fullName>
        <ecNumber>2.7.7.31</ecNumber>
    </recommendedName>
    <alternativeName>
        <fullName>Terminal addition enzyme</fullName>
    </alternativeName>
    <alternativeName>
        <fullName>Terminal deoxynucleotidyltransferase</fullName>
        <shortName>TDT</shortName>
        <shortName>Terminal transferase</shortName>
    </alternativeName>
</protein>
<reference key="1">
    <citation type="journal article" date="1986" name="Nucleic Acids Res.">
        <title>Isolation and characterization of bovine and mouse terminal deoxynucleotidyltransferase cDNAs expressible in mammalian cells.</title>
        <authorList>
            <person name="Koiwai O."/>
            <person name="Yokota T."/>
            <person name="Kageyama T."/>
            <person name="Hirose T."/>
            <person name="Yoshida S."/>
            <person name="Arai K."/>
        </authorList>
    </citation>
    <scope>NUCLEOTIDE SEQUENCE [MRNA]</scope>
    <scope>PARTIAL PROTEIN SEQUENCE</scope>
    <scope>FUNCTION</scope>
    <scope>SUBCELLULAR LOCATION</scope>
    <source>
        <tissue>Thymus</tissue>
    </source>
</reference>
<reference key="2">
    <citation type="submission" date="2006-04" db="EMBL/GenBank/DDBJ databases">
        <authorList>
            <consortium name="NIH - Mammalian Gene Collection (MGC) project"/>
        </authorList>
    </citation>
    <scope>NUCLEOTIDE SEQUENCE [LARGE SCALE MRNA]</scope>
    <source>
        <strain>Hereford</strain>
        <tissue>Thymus</tissue>
    </source>
</reference>
<reference key="3">
    <citation type="journal article" date="1987" name="Biochem. Biophys. Res. Commun.">
        <title>Analysis of human terminal deoxynucleotidyl transferase cDNA expressible in mammalian cells.</title>
        <authorList>
            <person name="Koiwai O."/>
            <person name="Kaneda T."/>
            <person name="Morishita R."/>
        </authorList>
    </citation>
    <scope>NUCLEOTIDE SEQUENCE [MRNA] OF 1-2</scope>
</reference>
<reference key="4">
    <citation type="journal article" date="1989" name="Biochemistry">
        <title>Photoaffinity labeling of terminal deoxynucleotidyl transferase. 2. Identification of peptides in the nucleotide binding domain.</title>
        <authorList>
            <person name="Evans R.K."/>
            <person name="Beach C.M."/>
            <person name="Coleman M.S."/>
        </authorList>
    </citation>
    <scope>PROTEIN SEQUENCE OF 132-168; 169-176; 183-188; 191-219; 223-334; 336-415 AND 421-509</scope>
</reference>
<reference key="5">
    <citation type="journal article" date="1988" name="J. Biol. Chem.">
        <title>Biochemistry of terminal deoxynucleotidyltransferase. Affinity labeling and identification of the deoxynucleoside triphosphate binding domain of terminal deoxynucleotidyltransferase.</title>
        <authorList>
            <person name="Pandey V.N."/>
            <person name="Modak M.J."/>
        </authorList>
    </citation>
    <scope>PROTEIN SEQUENCE OF 210-238</scope>
</reference>
<reference key="6">
    <citation type="journal article" date="1989" name="J. Biol. Chem.">
        <title>Biochemistry of terminal deoxynucleotidyltransferase. Identification and unity of ribo- and deoxyribonucleoside triphosphate binding site in terminal deoxynucleotidyltransferase.</title>
        <authorList>
            <person name="Pandey V.N."/>
            <person name="Modak M.J."/>
        </authorList>
    </citation>
    <scope>PROTEIN SEQUENCE OF 210-221 AND 224-238</scope>
    <scope>ATP- AND DTTP-BINDING SITES CYS-216 AND CYS-224</scope>
</reference>
<reference key="7">
    <citation type="journal article" date="1984" name="Proc. Natl. Acad. Sci. U.S.A.">
        <title>Molecular cloning of human terminal deoxynucleotidyltransferase.</title>
        <authorList>
            <person name="Peterson R.C."/>
            <person name="Cheung L.C."/>
            <person name="Mattaliano R.J."/>
            <person name="Chang L.M.S."/>
            <person name="Bollum F.J."/>
        </authorList>
    </citation>
    <scope>PROTEIN SEQUENCE OF 306-326; 337-357 AND 483-506</scope>
</reference>
<proteinExistence type="evidence at protein level"/>
<keyword id="KW-0903">Direct protein sequencing</keyword>
<keyword id="KW-0460">Magnesium</keyword>
<keyword id="KW-0479">Metal-binding</keyword>
<keyword id="KW-0548">Nucleotidyltransferase</keyword>
<keyword id="KW-0539">Nucleus</keyword>
<keyword id="KW-1185">Reference proteome</keyword>
<keyword id="KW-0780">Terminal addition</keyword>
<keyword id="KW-0808">Transferase</keyword>
<comment type="function">
    <text evidence="2 5">Template-independent DNA polymerase which catalyzes the random addition of deoxynucleoside 5'-triphosphate to the 3'-end of a DNA initiator (PubMed:3755527). One of the in vivo functions of this enzyme is the addition of nucleotides at the junction (N region) of rearranged Ig heavy chain and T-cell receptor gene segments during the maturation of B- and T-cells.</text>
</comment>
<comment type="catalytic activity">
    <reaction evidence="2">
        <text>DNA(n) + a 2'-deoxyribonucleoside 5'-triphosphate = DNA(n+1) + diphosphate</text>
        <dbReference type="Rhea" id="RHEA:22508"/>
        <dbReference type="Rhea" id="RHEA-COMP:17339"/>
        <dbReference type="Rhea" id="RHEA-COMP:17340"/>
        <dbReference type="ChEBI" id="CHEBI:33019"/>
        <dbReference type="ChEBI" id="CHEBI:61560"/>
        <dbReference type="ChEBI" id="CHEBI:173112"/>
        <dbReference type="EC" id="2.7.7.31"/>
    </reaction>
</comment>
<comment type="cofactor">
    <cofactor evidence="2">
        <name>Mg(2+)</name>
        <dbReference type="ChEBI" id="CHEBI:18420"/>
    </cofactor>
    <text evidence="2">Can also utilize other divalent cations, such as Mn(2+) and Co(2+) (in vitro).</text>
</comment>
<comment type="subunit">
    <text evidence="1">Interacts with PRP19 and DNTTIP1. Forms a ternary complex with DNTTIP2 and core histone. Released from this complex by PCNA. Interacts with TRERF1.</text>
</comment>
<comment type="subcellular location">
    <subcellularLocation>
        <location evidence="5">Nucleus</location>
    </subcellularLocation>
</comment>
<comment type="similarity">
    <text evidence="6">Belongs to the DNA polymerase type-X family.</text>
</comment>
<comment type="sequence caution" evidence="6">
    <conflict type="erroneous initiation">
        <sequence resource="EMBL-CDS" id="AAA87354"/>
    </conflict>
</comment>
<comment type="sequence caution" evidence="6">
    <conflict type="erroneous initiation">
        <sequence resource="EMBL-CDS" id="CAA27734"/>
    </conflict>
</comment>
<gene>
    <name type="primary">DNTT</name>
    <name type="synonym">TDT</name>
</gene>
<feature type="chain" id="PRO_0000218790" description="DNA nucleotidylexotransferase">
    <location>
        <begin position="1"/>
        <end position="509"/>
    </location>
</feature>
<feature type="domain" description="BRCT" evidence="3">
    <location>
        <begin position="27"/>
        <end position="124"/>
    </location>
</feature>
<feature type="region of interest" description="Disordered" evidence="4">
    <location>
        <begin position="1"/>
        <end position="25"/>
    </location>
</feature>
<feature type="region of interest" description="Mediates interaction with DNTTIP2" evidence="1">
    <location>
        <begin position="151"/>
        <end position="509"/>
    </location>
</feature>
<feature type="region of interest" description="Involved in DNA binding" evidence="2">
    <location>
        <begin position="258"/>
        <end position="262"/>
    </location>
</feature>
<feature type="short sequence motif" description="Nuclear localization signal" evidence="5">
    <location>
        <begin position="11"/>
        <end position="17"/>
    </location>
</feature>
<feature type="binding site" evidence="2">
    <location>
        <begin position="333"/>
        <end position="338"/>
    </location>
    <ligand>
        <name>a 2'-deoxyribonucleoside 5'-triphosphate</name>
        <dbReference type="ChEBI" id="CHEBI:61560"/>
    </ligand>
</feature>
<feature type="binding site" evidence="2">
    <location>
        <begin position="342"/>
        <end position="345"/>
    </location>
    <ligand>
        <name>a 2'-deoxyribonucleoside 5'-triphosphate</name>
        <dbReference type="ChEBI" id="CHEBI:61560"/>
    </ligand>
</feature>
<feature type="binding site" evidence="2">
    <location>
        <position position="343"/>
    </location>
    <ligand>
        <name>Mg(2+)</name>
        <dbReference type="ChEBI" id="CHEBI:18420"/>
    </ligand>
</feature>
<feature type="binding site" evidence="2">
    <location>
        <position position="345"/>
    </location>
    <ligand>
        <name>Mg(2+)</name>
        <dbReference type="ChEBI" id="CHEBI:18420"/>
    </ligand>
</feature>
<feature type="binding site" evidence="2">
    <location>
        <position position="433"/>
    </location>
    <ligand>
        <name>Mg(2+)</name>
        <dbReference type="ChEBI" id="CHEBI:18420"/>
    </ligand>
</feature>
<feature type="binding site" evidence="2">
    <location>
        <begin position="448"/>
        <end position="449"/>
    </location>
    <ligand>
        <name>a 2'-deoxyribonucleoside 5'-triphosphate</name>
        <dbReference type="ChEBI" id="CHEBI:61560"/>
    </ligand>
</feature>
<sequence>MDPLCTASSGPRKKRPRQVGASMASPPHDIKFQNLVLFILEKKMGTTRRNFLMELARRKGFRVENELSDSVTHIVAENNSGSEVLEWLQVQNIRASSQLELLDVSWLIESMGAGKPVEITGKHQLVVRTDYSATPNPGFQKTPPLAVKKISQYACQRKTTLNNYNHIFTDAFEILAENSEFKENEVSYVTFMRAASVLKSLPFTIISMKDTEGIPCLGDKVKCIIEEIIEDGESSEVKAVLNDERYQSFKLFTSVFGVGLKTSEKWFRMGFRSLSKIMSDKTLKFTKMQKAGFLYYEDLVSCVTRAEAEAVGVLVKEAVWAFLPDAFVTMTGGFRRGKKIGHDVDFLITSPGSAEDEEQLLPKVINLWEKKGLLLYYDLVESTFEKFKLPSRQVDTLDHFQKCFLILKLHHQRVDSSKSNQQEGKTWKAIRVDLVMCPYENRAFALLGWTGSRQFERDIRRYATHERKMMLDNHALYDKTKRVFLKAESEEEIFAHLGLDYIEPWERNA</sequence>
<organism>
    <name type="scientific">Bos taurus</name>
    <name type="common">Bovine</name>
    <dbReference type="NCBI Taxonomy" id="9913"/>
    <lineage>
        <taxon>Eukaryota</taxon>
        <taxon>Metazoa</taxon>
        <taxon>Chordata</taxon>
        <taxon>Craniata</taxon>
        <taxon>Vertebrata</taxon>
        <taxon>Euteleostomi</taxon>
        <taxon>Mammalia</taxon>
        <taxon>Eutheria</taxon>
        <taxon>Laurasiatheria</taxon>
        <taxon>Artiodactyla</taxon>
        <taxon>Ruminantia</taxon>
        <taxon>Pecora</taxon>
        <taxon>Bovidae</taxon>
        <taxon>Bovinae</taxon>
        <taxon>Bos</taxon>
    </lineage>
</organism>
<name>TDT_BOVIN</name>
<dbReference type="EC" id="2.7.7.31"/>
<dbReference type="EMBL" id="X04122">
    <property type="protein sequence ID" value="CAA27734.1"/>
    <property type="status" value="ALT_INIT"/>
    <property type="molecule type" value="mRNA"/>
</dbReference>
<dbReference type="EMBL" id="BC114820">
    <property type="protein sequence ID" value="AAI14821.1"/>
    <property type="molecule type" value="mRNA"/>
</dbReference>
<dbReference type="EMBL" id="M26146">
    <property type="protein sequence ID" value="AAA87354.1"/>
    <property type="status" value="ALT_INIT"/>
    <property type="molecule type" value="mRNA"/>
</dbReference>
<dbReference type="PIR" id="A23595">
    <property type="entry name" value="A23595"/>
</dbReference>
<dbReference type="RefSeq" id="NP_803461.2">
    <property type="nucleotide sequence ID" value="NM_177495.3"/>
</dbReference>
<dbReference type="RefSeq" id="XP_005225486.1">
    <property type="nucleotide sequence ID" value="XM_005225429.2"/>
</dbReference>
<dbReference type="SMR" id="P06526"/>
<dbReference type="BioGRID" id="158482">
    <property type="interactions" value="1"/>
</dbReference>
<dbReference type="FunCoup" id="P06526">
    <property type="interactions" value="139"/>
</dbReference>
<dbReference type="STRING" id="9913.ENSBTAP00000027223"/>
<dbReference type="BindingDB" id="P06526"/>
<dbReference type="ChEMBL" id="CHEMBL5289"/>
<dbReference type="PaxDb" id="9913-ENSBTAP00000051460"/>
<dbReference type="Ensembl" id="ENSBTAT00000027223.6">
    <property type="protein sequence ID" value="ENSBTAP00000027223.5"/>
    <property type="gene ID" value="ENSBTAG00000020427.6"/>
</dbReference>
<dbReference type="GeneID" id="281120"/>
<dbReference type="KEGG" id="bta:281120"/>
<dbReference type="CTD" id="1791"/>
<dbReference type="VEuPathDB" id="HostDB:ENSBTAG00000020427"/>
<dbReference type="VGNC" id="VGNC:28150">
    <property type="gene designation" value="DNTT"/>
</dbReference>
<dbReference type="eggNOG" id="KOG2534">
    <property type="taxonomic scope" value="Eukaryota"/>
</dbReference>
<dbReference type="GeneTree" id="ENSGT00940000158584"/>
<dbReference type="HOGENOM" id="CLU_008698_0_0_1"/>
<dbReference type="InParanoid" id="P06526"/>
<dbReference type="OMA" id="PKVINLW"/>
<dbReference type="OrthoDB" id="205514at2759"/>
<dbReference type="TreeFam" id="TF103012"/>
<dbReference type="BRENDA" id="2.7.7.31">
    <property type="organism ID" value="908"/>
</dbReference>
<dbReference type="PRO" id="PR:P06526"/>
<dbReference type="Proteomes" id="UP000009136">
    <property type="component" value="Chromosome 26"/>
</dbReference>
<dbReference type="Bgee" id="ENSBTAG00000020427">
    <property type="expression patterns" value="Expressed in thymus and 15 other cell types or tissues"/>
</dbReference>
<dbReference type="GO" id="GO:0005829">
    <property type="term" value="C:cytosol"/>
    <property type="evidence" value="ECO:0007669"/>
    <property type="project" value="Ensembl"/>
</dbReference>
<dbReference type="GO" id="GO:0005654">
    <property type="term" value="C:nucleoplasm"/>
    <property type="evidence" value="ECO:0007669"/>
    <property type="project" value="Ensembl"/>
</dbReference>
<dbReference type="GO" id="GO:0005634">
    <property type="term" value="C:nucleus"/>
    <property type="evidence" value="ECO:0000250"/>
    <property type="project" value="UniProtKB"/>
</dbReference>
<dbReference type="GO" id="GO:0003677">
    <property type="term" value="F:DNA binding"/>
    <property type="evidence" value="ECO:0007669"/>
    <property type="project" value="InterPro"/>
</dbReference>
<dbReference type="GO" id="GO:0003912">
    <property type="term" value="F:DNA nucleotidylexotransferase activity"/>
    <property type="evidence" value="ECO:0000250"/>
    <property type="project" value="UniProtKB"/>
</dbReference>
<dbReference type="GO" id="GO:0003887">
    <property type="term" value="F:DNA-directed DNA polymerase activity"/>
    <property type="evidence" value="ECO:0007669"/>
    <property type="project" value="InterPro"/>
</dbReference>
<dbReference type="GO" id="GO:0046872">
    <property type="term" value="F:metal ion binding"/>
    <property type="evidence" value="ECO:0007669"/>
    <property type="project" value="UniProtKB-KW"/>
</dbReference>
<dbReference type="GO" id="GO:0006259">
    <property type="term" value="P:DNA metabolic process"/>
    <property type="evidence" value="ECO:0000250"/>
    <property type="project" value="UniProtKB"/>
</dbReference>
<dbReference type="GO" id="GO:0006304">
    <property type="term" value="P:DNA modification"/>
    <property type="evidence" value="ECO:0007669"/>
    <property type="project" value="UniProtKB-KW"/>
</dbReference>
<dbReference type="GO" id="GO:0006303">
    <property type="term" value="P:double-strand break repair via nonhomologous end joining"/>
    <property type="evidence" value="ECO:0000318"/>
    <property type="project" value="GO_Central"/>
</dbReference>
<dbReference type="CDD" id="cd18443">
    <property type="entry name" value="BRCT_DNTT"/>
    <property type="match status" value="1"/>
</dbReference>
<dbReference type="CDD" id="cd00141">
    <property type="entry name" value="NT_POLXc"/>
    <property type="match status" value="1"/>
</dbReference>
<dbReference type="FunFam" id="3.30.210.10:FF:000003">
    <property type="entry name" value="DNA nucleotidylexotransferase"/>
    <property type="match status" value="1"/>
</dbReference>
<dbReference type="FunFam" id="3.30.460.10:FF:000028">
    <property type="entry name" value="DNA nucleotidylexotransferase"/>
    <property type="match status" value="1"/>
</dbReference>
<dbReference type="FunFam" id="3.40.50.10190:FF:000041">
    <property type="entry name" value="DNA nucleotidylexotransferase"/>
    <property type="match status" value="1"/>
</dbReference>
<dbReference type="FunFam" id="1.10.150.20:FF:000010">
    <property type="entry name" value="DNA polymerase lambda"/>
    <property type="match status" value="1"/>
</dbReference>
<dbReference type="FunFam" id="1.10.150.110:FF:000003">
    <property type="entry name" value="DNA polymerase mu"/>
    <property type="match status" value="1"/>
</dbReference>
<dbReference type="Gene3D" id="1.10.150.20">
    <property type="entry name" value="5' to 3' exonuclease, C-terminal subdomain"/>
    <property type="match status" value="1"/>
</dbReference>
<dbReference type="Gene3D" id="3.30.460.10">
    <property type="entry name" value="Beta Polymerase, domain 2"/>
    <property type="match status" value="1"/>
</dbReference>
<dbReference type="Gene3D" id="3.40.50.10190">
    <property type="entry name" value="BRCT domain"/>
    <property type="match status" value="1"/>
</dbReference>
<dbReference type="Gene3D" id="1.10.150.110">
    <property type="entry name" value="DNA polymerase beta, N-terminal domain-like"/>
    <property type="match status" value="1"/>
</dbReference>
<dbReference type="Gene3D" id="3.30.210.10">
    <property type="entry name" value="DNA polymerase, thumb domain"/>
    <property type="match status" value="1"/>
</dbReference>
<dbReference type="InterPro" id="IPR001357">
    <property type="entry name" value="BRCT_dom"/>
</dbReference>
<dbReference type="InterPro" id="IPR036420">
    <property type="entry name" value="BRCT_dom_sf"/>
</dbReference>
<dbReference type="InterPro" id="IPR002054">
    <property type="entry name" value="DNA-dir_DNA_pol_X"/>
</dbReference>
<dbReference type="InterPro" id="IPR019843">
    <property type="entry name" value="DNA_pol-X_BS"/>
</dbReference>
<dbReference type="InterPro" id="IPR010996">
    <property type="entry name" value="DNA_pol_b-like_N"/>
</dbReference>
<dbReference type="InterPro" id="IPR018944">
    <property type="entry name" value="DNA_pol_lambd_fingers_domain"/>
</dbReference>
<dbReference type="InterPro" id="IPR027421">
    <property type="entry name" value="DNA_pol_lamdba_lyase_dom_sf"/>
</dbReference>
<dbReference type="InterPro" id="IPR037160">
    <property type="entry name" value="DNA_Pol_thumb_sf"/>
</dbReference>
<dbReference type="InterPro" id="IPR022312">
    <property type="entry name" value="DNA_pol_X"/>
</dbReference>
<dbReference type="InterPro" id="IPR043519">
    <property type="entry name" value="NT_sf"/>
</dbReference>
<dbReference type="InterPro" id="IPR029398">
    <property type="entry name" value="PolB_thumb"/>
</dbReference>
<dbReference type="InterPro" id="IPR002934">
    <property type="entry name" value="Polymerase_NTP_transf_dom"/>
</dbReference>
<dbReference type="InterPro" id="IPR027292">
    <property type="entry name" value="TdT"/>
</dbReference>
<dbReference type="InterPro" id="IPR001726">
    <property type="entry name" value="TdT/Mu"/>
</dbReference>
<dbReference type="PANTHER" id="PTHR11276:SF21">
    <property type="entry name" value="DNA NUCLEOTIDYLEXOTRANSFERASE"/>
    <property type="match status" value="1"/>
</dbReference>
<dbReference type="PANTHER" id="PTHR11276">
    <property type="entry name" value="DNA POLYMERASE TYPE-X FAMILY MEMBER"/>
    <property type="match status" value="1"/>
</dbReference>
<dbReference type="Pfam" id="PF00533">
    <property type="entry name" value="BRCT"/>
    <property type="match status" value="1"/>
</dbReference>
<dbReference type="Pfam" id="PF14791">
    <property type="entry name" value="DNA_pol_B_thumb"/>
    <property type="match status" value="1"/>
</dbReference>
<dbReference type="Pfam" id="PF10391">
    <property type="entry name" value="DNA_pol_lambd_f"/>
    <property type="match status" value="1"/>
</dbReference>
<dbReference type="Pfam" id="PF14716">
    <property type="entry name" value="HHH_8"/>
    <property type="match status" value="1"/>
</dbReference>
<dbReference type="Pfam" id="PF01909">
    <property type="entry name" value="NTP_transf_2"/>
    <property type="match status" value="1"/>
</dbReference>
<dbReference type="PIRSF" id="PIRSF000817">
    <property type="entry name" value="DNA_NT"/>
    <property type="match status" value="1"/>
</dbReference>
<dbReference type="PIRSF" id="PIRSF501175">
    <property type="entry name" value="TDT"/>
    <property type="match status" value="1"/>
</dbReference>
<dbReference type="PRINTS" id="PR00869">
    <property type="entry name" value="DNAPOLX"/>
</dbReference>
<dbReference type="PRINTS" id="PR00871">
    <property type="entry name" value="DNAPOLXTDT"/>
</dbReference>
<dbReference type="SMART" id="SM00292">
    <property type="entry name" value="BRCT"/>
    <property type="match status" value="1"/>
</dbReference>
<dbReference type="SMART" id="SM00483">
    <property type="entry name" value="POLXc"/>
    <property type="match status" value="1"/>
</dbReference>
<dbReference type="SUPFAM" id="SSF52113">
    <property type="entry name" value="BRCT domain"/>
    <property type="match status" value="1"/>
</dbReference>
<dbReference type="SUPFAM" id="SSF47802">
    <property type="entry name" value="DNA polymerase beta, N-terminal domain-like"/>
    <property type="match status" value="1"/>
</dbReference>
<dbReference type="SUPFAM" id="SSF81301">
    <property type="entry name" value="Nucleotidyltransferase"/>
    <property type="match status" value="1"/>
</dbReference>
<dbReference type="SUPFAM" id="SSF81585">
    <property type="entry name" value="PsbU/PolX domain-like"/>
    <property type="match status" value="1"/>
</dbReference>
<dbReference type="PROSITE" id="PS50172">
    <property type="entry name" value="BRCT"/>
    <property type="match status" value="1"/>
</dbReference>
<dbReference type="PROSITE" id="PS00522">
    <property type="entry name" value="DNA_POLYMERASE_X"/>
    <property type="match status" value="1"/>
</dbReference>
<evidence type="ECO:0000250" key="1">
    <source>
        <dbReference type="UniProtKB" id="P04053"/>
    </source>
</evidence>
<evidence type="ECO:0000250" key="2">
    <source>
        <dbReference type="UniProtKB" id="P09838"/>
    </source>
</evidence>
<evidence type="ECO:0000255" key="3">
    <source>
        <dbReference type="PROSITE-ProRule" id="PRU00033"/>
    </source>
</evidence>
<evidence type="ECO:0000256" key="4">
    <source>
        <dbReference type="SAM" id="MobiDB-lite"/>
    </source>
</evidence>
<evidence type="ECO:0000269" key="5">
    <source>
    </source>
</evidence>
<evidence type="ECO:0000305" key="6"/>
<accession>P06526</accession>
<accession>A4FUF8</accession>